<keyword id="KW-1185">Reference proteome</keyword>
<comment type="similarity">
    <text evidence="1">Belongs to the UPF0246 family.</text>
</comment>
<protein>
    <recommendedName>
        <fullName evidence="1">UPF0246 protein HRM2_41860</fullName>
    </recommendedName>
</protein>
<name>Y4186_DESAH</name>
<reference key="1">
    <citation type="journal article" date="2009" name="Environ. Microbiol.">
        <title>Genome sequence of Desulfobacterium autotrophicum HRM2, a marine sulfate reducer oxidizing organic carbon completely to carbon dioxide.</title>
        <authorList>
            <person name="Strittmatter A.W."/>
            <person name="Liesegang H."/>
            <person name="Rabus R."/>
            <person name="Decker I."/>
            <person name="Amann J."/>
            <person name="Andres S."/>
            <person name="Henne A."/>
            <person name="Fricke W.F."/>
            <person name="Martinez-Arias R."/>
            <person name="Bartels D."/>
            <person name="Goesmann A."/>
            <person name="Krause L."/>
            <person name="Puehler A."/>
            <person name="Klenk H.P."/>
            <person name="Richter M."/>
            <person name="Schuler M."/>
            <person name="Gloeckner F.O."/>
            <person name="Meyerdierks A."/>
            <person name="Gottschalk G."/>
            <person name="Amann R."/>
        </authorList>
    </citation>
    <scope>NUCLEOTIDE SEQUENCE [LARGE SCALE GENOMIC DNA]</scope>
    <source>
        <strain>ATCC 43914 / DSM 3382 / VKM B-1955 / HRM2</strain>
    </source>
</reference>
<accession>C0QD10</accession>
<feature type="chain" id="PRO_1000212423" description="UPF0246 protein HRM2_41860">
    <location>
        <begin position="1"/>
        <end position="256"/>
    </location>
</feature>
<proteinExistence type="inferred from homology"/>
<evidence type="ECO:0000255" key="1">
    <source>
        <dbReference type="HAMAP-Rule" id="MF_00652"/>
    </source>
</evidence>
<sequence length="256" mass="28727">MKIILSPAKTMADPEKTMLRPEIESEIIMTRPVFEQRAQALIRLLKGFSEIELKALFKVSDAIARKTLDQINGFGETRPVPAIFAFQGAVYKALAPEAFTGESLVFCRQNLVILSALYGVLNPFDAVFAHRLDFTCKLECGANMTLRKFWTSPIHEWFDENLAADEFIVNLASDEYASLVTKGGLKARVITLAFMEKKGGVLKTVAAHSKQARGLFLRQIVQQRVTEPGMIKSFKVAGYTYDGKISQKNRWVFVLK</sequence>
<organism>
    <name type="scientific">Desulforapulum autotrophicum (strain ATCC 43914 / DSM 3382 / VKM B-1955 / HRM2)</name>
    <name type="common">Desulfobacterium autotrophicum</name>
    <dbReference type="NCBI Taxonomy" id="177437"/>
    <lineage>
        <taxon>Bacteria</taxon>
        <taxon>Pseudomonadati</taxon>
        <taxon>Thermodesulfobacteriota</taxon>
        <taxon>Desulfobacteria</taxon>
        <taxon>Desulfobacterales</taxon>
        <taxon>Desulfobacteraceae</taxon>
        <taxon>Desulforapulum</taxon>
    </lineage>
</organism>
<dbReference type="EMBL" id="CP001087">
    <property type="protein sequence ID" value="ACN17242.1"/>
    <property type="molecule type" value="Genomic_DNA"/>
</dbReference>
<dbReference type="SMR" id="C0QD10"/>
<dbReference type="STRING" id="177437.HRM2_41860"/>
<dbReference type="KEGG" id="dat:HRM2_41860"/>
<dbReference type="eggNOG" id="COG3022">
    <property type="taxonomic scope" value="Bacteria"/>
</dbReference>
<dbReference type="HOGENOM" id="CLU_061989_1_0_7"/>
<dbReference type="Proteomes" id="UP000000442">
    <property type="component" value="Chromosome"/>
</dbReference>
<dbReference type="GO" id="GO:0005829">
    <property type="term" value="C:cytosol"/>
    <property type="evidence" value="ECO:0007669"/>
    <property type="project" value="TreeGrafter"/>
</dbReference>
<dbReference type="GO" id="GO:0033194">
    <property type="term" value="P:response to hydroperoxide"/>
    <property type="evidence" value="ECO:0007669"/>
    <property type="project" value="TreeGrafter"/>
</dbReference>
<dbReference type="HAMAP" id="MF_00652">
    <property type="entry name" value="UPF0246"/>
    <property type="match status" value="1"/>
</dbReference>
<dbReference type="InterPro" id="IPR005583">
    <property type="entry name" value="YaaA"/>
</dbReference>
<dbReference type="PANTHER" id="PTHR30283:SF4">
    <property type="entry name" value="PEROXIDE STRESS RESISTANCE PROTEIN YAAA"/>
    <property type="match status" value="1"/>
</dbReference>
<dbReference type="PANTHER" id="PTHR30283">
    <property type="entry name" value="PEROXIDE STRESS RESPONSE PROTEIN YAAA"/>
    <property type="match status" value="1"/>
</dbReference>
<dbReference type="Pfam" id="PF03883">
    <property type="entry name" value="H2O2_YaaD"/>
    <property type="match status" value="1"/>
</dbReference>
<gene>
    <name type="ordered locus">HRM2_41860</name>
</gene>